<feature type="chain" id="PRO_0000075636" description="2-C-methyl-D-erythritol 4-phosphate cytidylyltransferase">
    <location>
        <begin position="1"/>
        <end position="226"/>
    </location>
</feature>
<feature type="site" description="Transition state stabilizer" evidence="1">
    <location>
        <position position="13"/>
    </location>
</feature>
<feature type="site" description="Transition state stabilizer" evidence="1">
    <location>
        <position position="20"/>
    </location>
</feature>
<feature type="site" description="Positions MEP for the nucleophilic attack" evidence="1">
    <location>
        <position position="150"/>
    </location>
</feature>
<feature type="site" description="Positions MEP for the nucleophilic attack" evidence="1">
    <location>
        <position position="206"/>
    </location>
</feature>
<dbReference type="EC" id="2.7.7.60" evidence="1"/>
<dbReference type="EMBL" id="BX569694">
    <property type="protein sequence ID" value="CAE08364.1"/>
    <property type="molecule type" value="Genomic_DNA"/>
</dbReference>
<dbReference type="RefSeq" id="WP_011128707.1">
    <property type="nucleotide sequence ID" value="NC_005070.1"/>
</dbReference>
<dbReference type="SMR" id="Q7U559"/>
<dbReference type="STRING" id="84588.SYNW1849"/>
<dbReference type="KEGG" id="syw:SYNW1849"/>
<dbReference type="eggNOG" id="COG1211">
    <property type="taxonomic scope" value="Bacteria"/>
</dbReference>
<dbReference type="HOGENOM" id="CLU_061281_1_0_3"/>
<dbReference type="UniPathway" id="UPA00056">
    <property type="reaction ID" value="UER00093"/>
</dbReference>
<dbReference type="Proteomes" id="UP000001422">
    <property type="component" value="Chromosome"/>
</dbReference>
<dbReference type="GO" id="GO:0050518">
    <property type="term" value="F:2-C-methyl-D-erythritol 4-phosphate cytidylyltransferase activity"/>
    <property type="evidence" value="ECO:0007669"/>
    <property type="project" value="UniProtKB-UniRule"/>
</dbReference>
<dbReference type="GO" id="GO:0019288">
    <property type="term" value="P:isopentenyl diphosphate biosynthetic process, methylerythritol 4-phosphate pathway"/>
    <property type="evidence" value="ECO:0007669"/>
    <property type="project" value="UniProtKB-UniRule"/>
</dbReference>
<dbReference type="CDD" id="cd02516">
    <property type="entry name" value="CDP-ME_synthetase"/>
    <property type="match status" value="1"/>
</dbReference>
<dbReference type="FunFam" id="3.90.550.10:FF:000003">
    <property type="entry name" value="2-C-methyl-D-erythritol 4-phosphate cytidylyltransferase"/>
    <property type="match status" value="1"/>
</dbReference>
<dbReference type="Gene3D" id="3.90.550.10">
    <property type="entry name" value="Spore Coat Polysaccharide Biosynthesis Protein SpsA, Chain A"/>
    <property type="match status" value="1"/>
</dbReference>
<dbReference type="HAMAP" id="MF_00108">
    <property type="entry name" value="IspD"/>
    <property type="match status" value="1"/>
</dbReference>
<dbReference type="InterPro" id="IPR001228">
    <property type="entry name" value="IspD"/>
</dbReference>
<dbReference type="InterPro" id="IPR034683">
    <property type="entry name" value="IspD/TarI"/>
</dbReference>
<dbReference type="InterPro" id="IPR050088">
    <property type="entry name" value="IspD/TarI_cytidylyltransf_bact"/>
</dbReference>
<dbReference type="InterPro" id="IPR018294">
    <property type="entry name" value="ISPD_synthase_CS"/>
</dbReference>
<dbReference type="InterPro" id="IPR029044">
    <property type="entry name" value="Nucleotide-diphossugar_trans"/>
</dbReference>
<dbReference type="NCBIfam" id="TIGR00453">
    <property type="entry name" value="ispD"/>
    <property type="match status" value="1"/>
</dbReference>
<dbReference type="PANTHER" id="PTHR32125">
    <property type="entry name" value="2-C-METHYL-D-ERYTHRITOL 4-PHOSPHATE CYTIDYLYLTRANSFERASE, CHLOROPLASTIC"/>
    <property type="match status" value="1"/>
</dbReference>
<dbReference type="PANTHER" id="PTHR32125:SF4">
    <property type="entry name" value="2-C-METHYL-D-ERYTHRITOL 4-PHOSPHATE CYTIDYLYLTRANSFERASE, CHLOROPLASTIC"/>
    <property type="match status" value="1"/>
</dbReference>
<dbReference type="Pfam" id="PF01128">
    <property type="entry name" value="IspD"/>
    <property type="match status" value="1"/>
</dbReference>
<dbReference type="SUPFAM" id="SSF53448">
    <property type="entry name" value="Nucleotide-diphospho-sugar transferases"/>
    <property type="match status" value="1"/>
</dbReference>
<dbReference type="PROSITE" id="PS01295">
    <property type="entry name" value="ISPD"/>
    <property type="match status" value="1"/>
</dbReference>
<reference key="1">
    <citation type="journal article" date="2003" name="Nature">
        <title>The genome of a motile marine Synechococcus.</title>
        <authorList>
            <person name="Palenik B."/>
            <person name="Brahamsha B."/>
            <person name="Larimer F.W."/>
            <person name="Land M.L."/>
            <person name="Hauser L."/>
            <person name="Chain P."/>
            <person name="Lamerdin J.E."/>
            <person name="Regala W."/>
            <person name="Allen E.E."/>
            <person name="McCarren J."/>
            <person name="Paulsen I.T."/>
            <person name="Dufresne A."/>
            <person name="Partensky F."/>
            <person name="Webb E.A."/>
            <person name="Waterbury J."/>
        </authorList>
    </citation>
    <scope>NUCLEOTIDE SEQUENCE [LARGE SCALE GENOMIC DNA]</scope>
    <source>
        <strain>WH8102</strain>
    </source>
</reference>
<keyword id="KW-0414">Isoprene biosynthesis</keyword>
<keyword id="KW-0548">Nucleotidyltransferase</keyword>
<keyword id="KW-0808">Transferase</keyword>
<proteinExistence type="inferred from homology"/>
<comment type="function">
    <text evidence="1">Catalyzes the formation of 4-diphosphocytidyl-2-C-methyl-D-erythritol from CTP and 2-C-methyl-D-erythritol 4-phosphate (MEP).</text>
</comment>
<comment type="catalytic activity">
    <reaction evidence="1">
        <text>2-C-methyl-D-erythritol 4-phosphate + CTP + H(+) = 4-CDP-2-C-methyl-D-erythritol + diphosphate</text>
        <dbReference type="Rhea" id="RHEA:13429"/>
        <dbReference type="ChEBI" id="CHEBI:15378"/>
        <dbReference type="ChEBI" id="CHEBI:33019"/>
        <dbReference type="ChEBI" id="CHEBI:37563"/>
        <dbReference type="ChEBI" id="CHEBI:57823"/>
        <dbReference type="ChEBI" id="CHEBI:58262"/>
        <dbReference type="EC" id="2.7.7.60"/>
    </reaction>
</comment>
<comment type="pathway">
    <text evidence="1">Isoprenoid biosynthesis; isopentenyl diphosphate biosynthesis via DXP pathway; isopentenyl diphosphate from 1-deoxy-D-xylulose 5-phosphate: step 2/6.</text>
</comment>
<comment type="similarity">
    <text evidence="1">Belongs to the IspD/TarI cytidylyltransferase family. IspD subfamily.</text>
</comment>
<name>ISPD_PARMW</name>
<protein>
    <recommendedName>
        <fullName evidence="1">2-C-methyl-D-erythritol 4-phosphate cytidylyltransferase</fullName>
        <ecNumber evidence="1">2.7.7.60</ecNumber>
    </recommendedName>
    <alternativeName>
        <fullName evidence="1">4-diphosphocytidyl-2C-methyl-D-erythritol synthase</fullName>
    </alternativeName>
    <alternativeName>
        <fullName evidence="1">MEP cytidylyltransferase</fullName>
        <shortName evidence="1">MCT</shortName>
    </alternativeName>
</protein>
<evidence type="ECO:0000255" key="1">
    <source>
        <dbReference type="HAMAP-Rule" id="MF_00108"/>
    </source>
</evidence>
<sequence>MHLLIAAAGSGRRMGADRNKLLLPLAGKPVIAWTLKAALAAEHIQWIGVVGQEIDREPILDLVRDANKPVTWIQGGSTRQESVLRGLAGLPEAAEQVLIHDGARCLAEPALFDRCAMALASGQALIAATPVTDTIKRVDADGVITDTPDRSELWAAQTPQGFQVDQLRHGHAEAEANGWTVTDDASLYERLGWPVQVLDAGPSNIKVTTPFDLNVAEAVLALRQQD</sequence>
<organism>
    <name type="scientific">Parasynechococcus marenigrum (strain WH8102)</name>
    <dbReference type="NCBI Taxonomy" id="84588"/>
    <lineage>
        <taxon>Bacteria</taxon>
        <taxon>Bacillati</taxon>
        <taxon>Cyanobacteriota</taxon>
        <taxon>Cyanophyceae</taxon>
        <taxon>Synechococcales</taxon>
        <taxon>Prochlorococcaceae</taxon>
        <taxon>Parasynechococcus</taxon>
        <taxon>Parasynechococcus marenigrum</taxon>
    </lineage>
</organism>
<gene>
    <name evidence="1" type="primary">ispD</name>
    <name type="ordered locus">SYNW1849</name>
</gene>
<accession>Q7U559</accession>